<name>DAPB_XYLF2</name>
<organism>
    <name type="scientific">Xylella fastidiosa (strain M23)</name>
    <dbReference type="NCBI Taxonomy" id="405441"/>
    <lineage>
        <taxon>Bacteria</taxon>
        <taxon>Pseudomonadati</taxon>
        <taxon>Pseudomonadota</taxon>
        <taxon>Gammaproteobacteria</taxon>
        <taxon>Lysobacterales</taxon>
        <taxon>Lysobacteraceae</taxon>
        <taxon>Xylella</taxon>
    </lineage>
</organism>
<proteinExistence type="inferred from homology"/>
<dbReference type="EC" id="1.17.1.8" evidence="1"/>
<dbReference type="EMBL" id="CP001011">
    <property type="protein sequence ID" value="ACB91839.1"/>
    <property type="molecule type" value="Genomic_DNA"/>
</dbReference>
<dbReference type="SMR" id="B2I841"/>
<dbReference type="KEGG" id="xfn:XfasM23_0391"/>
<dbReference type="HOGENOM" id="CLU_047479_2_2_6"/>
<dbReference type="UniPathway" id="UPA00034">
    <property type="reaction ID" value="UER00018"/>
</dbReference>
<dbReference type="Proteomes" id="UP000001698">
    <property type="component" value="Chromosome"/>
</dbReference>
<dbReference type="GO" id="GO:0005829">
    <property type="term" value="C:cytosol"/>
    <property type="evidence" value="ECO:0007669"/>
    <property type="project" value="TreeGrafter"/>
</dbReference>
<dbReference type="GO" id="GO:0008839">
    <property type="term" value="F:4-hydroxy-tetrahydrodipicolinate reductase"/>
    <property type="evidence" value="ECO:0007669"/>
    <property type="project" value="UniProtKB-EC"/>
</dbReference>
<dbReference type="GO" id="GO:0051287">
    <property type="term" value="F:NAD binding"/>
    <property type="evidence" value="ECO:0007669"/>
    <property type="project" value="UniProtKB-UniRule"/>
</dbReference>
<dbReference type="GO" id="GO:0050661">
    <property type="term" value="F:NADP binding"/>
    <property type="evidence" value="ECO:0007669"/>
    <property type="project" value="UniProtKB-UniRule"/>
</dbReference>
<dbReference type="GO" id="GO:0016726">
    <property type="term" value="F:oxidoreductase activity, acting on CH or CH2 groups, NAD or NADP as acceptor"/>
    <property type="evidence" value="ECO:0007669"/>
    <property type="project" value="UniProtKB-UniRule"/>
</dbReference>
<dbReference type="GO" id="GO:0019877">
    <property type="term" value="P:diaminopimelate biosynthetic process"/>
    <property type="evidence" value="ECO:0007669"/>
    <property type="project" value="UniProtKB-UniRule"/>
</dbReference>
<dbReference type="GO" id="GO:0009089">
    <property type="term" value="P:lysine biosynthetic process via diaminopimelate"/>
    <property type="evidence" value="ECO:0007669"/>
    <property type="project" value="UniProtKB-UniRule"/>
</dbReference>
<dbReference type="CDD" id="cd02274">
    <property type="entry name" value="DHDPR_N"/>
    <property type="match status" value="1"/>
</dbReference>
<dbReference type="Gene3D" id="3.30.360.10">
    <property type="entry name" value="Dihydrodipicolinate Reductase, domain 2"/>
    <property type="match status" value="1"/>
</dbReference>
<dbReference type="Gene3D" id="3.40.50.720">
    <property type="entry name" value="NAD(P)-binding Rossmann-like Domain"/>
    <property type="match status" value="1"/>
</dbReference>
<dbReference type="HAMAP" id="MF_00102">
    <property type="entry name" value="DapB"/>
    <property type="match status" value="1"/>
</dbReference>
<dbReference type="InterPro" id="IPR022663">
    <property type="entry name" value="DapB_C"/>
</dbReference>
<dbReference type="InterPro" id="IPR000846">
    <property type="entry name" value="DapB_N"/>
</dbReference>
<dbReference type="InterPro" id="IPR022664">
    <property type="entry name" value="DapB_N_CS"/>
</dbReference>
<dbReference type="InterPro" id="IPR023940">
    <property type="entry name" value="DHDPR_bac"/>
</dbReference>
<dbReference type="InterPro" id="IPR036291">
    <property type="entry name" value="NAD(P)-bd_dom_sf"/>
</dbReference>
<dbReference type="NCBIfam" id="TIGR00036">
    <property type="entry name" value="dapB"/>
    <property type="match status" value="1"/>
</dbReference>
<dbReference type="PANTHER" id="PTHR20836:SF0">
    <property type="entry name" value="4-HYDROXY-TETRAHYDRODIPICOLINATE REDUCTASE 1, CHLOROPLASTIC-RELATED"/>
    <property type="match status" value="1"/>
</dbReference>
<dbReference type="PANTHER" id="PTHR20836">
    <property type="entry name" value="DIHYDRODIPICOLINATE REDUCTASE"/>
    <property type="match status" value="1"/>
</dbReference>
<dbReference type="Pfam" id="PF05173">
    <property type="entry name" value="DapB_C"/>
    <property type="match status" value="1"/>
</dbReference>
<dbReference type="Pfam" id="PF01113">
    <property type="entry name" value="DapB_N"/>
    <property type="match status" value="1"/>
</dbReference>
<dbReference type="PIRSF" id="PIRSF000161">
    <property type="entry name" value="DHPR"/>
    <property type="match status" value="1"/>
</dbReference>
<dbReference type="SUPFAM" id="SSF55347">
    <property type="entry name" value="Glyceraldehyde-3-phosphate dehydrogenase-like, C-terminal domain"/>
    <property type="match status" value="1"/>
</dbReference>
<dbReference type="SUPFAM" id="SSF51735">
    <property type="entry name" value="NAD(P)-binding Rossmann-fold domains"/>
    <property type="match status" value="1"/>
</dbReference>
<dbReference type="PROSITE" id="PS01298">
    <property type="entry name" value="DAPB"/>
    <property type="match status" value="1"/>
</dbReference>
<feature type="chain" id="PRO_1000094020" description="4-hydroxy-tetrahydrodipicolinate reductase">
    <location>
        <begin position="1"/>
        <end position="236"/>
    </location>
</feature>
<feature type="active site" description="Proton donor/acceptor" evidence="1">
    <location>
        <position position="148"/>
    </location>
</feature>
<feature type="active site" description="Proton donor" evidence="1">
    <location>
        <position position="152"/>
    </location>
</feature>
<feature type="binding site" evidence="1">
    <location>
        <begin position="11"/>
        <end position="16"/>
    </location>
    <ligand>
        <name>NAD(+)</name>
        <dbReference type="ChEBI" id="CHEBI:57540"/>
    </ligand>
</feature>
<feature type="binding site" evidence="1">
    <location>
        <begin position="92"/>
        <end position="94"/>
    </location>
    <ligand>
        <name>NAD(+)</name>
        <dbReference type="ChEBI" id="CHEBI:57540"/>
    </ligand>
</feature>
<feature type="binding site" evidence="1">
    <location>
        <begin position="116"/>
        <end position="119"/>
    </location>
    <ligand>
        <name>NAD(+)</name>
        <dbReference type="ChEBI" id="CHEBI:57540"/>
    </ligand>
</feature>
<feature type="binding site" evidence="1">
    <location>
        <position position="149"/>
    </location>
    <ligand>
        <name>(S)-2,3,4,5-tetrahydrodipicolinate</name>
        <dbReference type="ChEBI" id="CHEBI:16845"/>
    </ligand>
</feature>
<feature type="binding site" evidence="1">
    <location>
        <begin position="158"/>
        <end position="159"/>
    </location>
    <ligand>
        <name>(S)-2,3,4,5-tetrahydrodipicolinate</name>
        <dbReference type="ChEBI" id="CHEBI:16845"/>
    </ligand>
</feature>
<reference key="1">
    <citation type="journal article" date="2010" name="J. Bacteriol.">
        <title>Whole genome sequences of two Xylella fastidiosa strains (M12 and M23) causing almond leaf scorch disease in California.</title>
        <authorList>
            <person name="Chen J."/>
            <person name="Xie G."/>
            <person name="Han S."/>
            <person name="Chertkov O."/>
            <person name="Sims D."/>
            <person name="Civerolo E.L."/>
        </authorList>
    </citation>
    <scope>NUCLEOTIDE SEQUENCE [LARGE SCALE GENOMIC DNA]</scope>
    <source>
        <strain>M23</strain>
    </source>
</reference>
<evidence type="ECO:0000255" key="1">
    <source>
        <dbReference type="HAMAP-Rule" id="MF_00102"/>
    </source>
</evidence>
<evidence type="ECO:0000305" key="2"/>
<sequence length="236" mass="24944">MDSFLRLLIHGASGRMGQSLLRLASEDPSFQVTAAVVGNAPHRHVSDGVPFFAAAELAAVPAFDVAIDFSLPQGFSSLLALCVARAVPLVSGTTGLDSRQHEALVMAGARIPLVWGSNFSVGMAVLVNLVERAGDALSGWDCDIVESHHVHKQDAPSGSALTLGEAVACKGIAPRYTSLRAGDIIGDHLVQFTGLGERIELVHRASNRDVFARGALSVARRVVGRVPGCYRVRDLM</sequence>
<gene>
    <name evidence="1" type="primary">dapB</name>
    <name type="ordered locus">XfasM23_0391</name>
</gene>
<accession>B2I841</accession>
<protein>
    <recommendedName>
        <fullName evidence="1">4-hydroxy-tetrahydrodipicolinate reductase</fullName>
        <shortName evidence="1">HTPA reductase</shortName>
        <ecNumber evidence="1">1.17.1.8</ecNumber>
    </recommendedName>
</protein>
<comment type="function">
    <text evidence="1">Catalyzes the conversion of 4-hydroxy-tetrahydrodipicolinate (HTPA) to tetrahydrodipicolinate.</text>
</comment>
<comment type="catalytic activity">
    <reaction evidence="1">
        <text>(S)-2,3,4,5-tetrahydrodipicolinate + NAD(+) + H2O = (2S,4S)-4-hydroxy-2,3,4,5-tetrahydrodipicolinate + NADH + H(+)</text>
        <dbReference type="Rhea" id="RHEA:35323"/>
        <dbReference type="ChEBI" id="CHEBI:15377"/>
        <dbReference type="ChEBI" id="CHEBI:15378"/>
        <dbReference type="ChEBI" id="CHEBI:16845"/>
        <dbReference type="ChEBI" id="CHEBI:57540"/>
        <dbReference type="ChEBI" id="CHEBI:57945"/>
        <dbReference type="ChEBI" id="CHEBI:67139"/>
        <dbReference type="EC" id="1.17.1.8"/>
    </reaction>
</comment>
<comment type="catalytic activity">
    <reaction evidence="1">
        <text>(S)-2,3,4,5-tetrahydrodipicolinate + NADP(+) + H2O = (2S,4S)-4-hydroxy-2,3,4,5-tetrahydrodipicolinate + NADPH + H(+)</text>
        <dbReference type="Rhea" id="RHEA:35331"/>
        <dbReference type="ChEBI" id="CHEBI:15377"/>
        <dbReference type="ChEBI" id="CHEBI:15378"/>
        <dbReference type="ChEBI" id="CHEBI:16845"/>
        <dbReference type="ChEBI" id="CHEBI:57783"/>
        <dbReference type="ChEBI" id="CHEBI:58349"/>
        <dbReference type="ChEBI" id="CHEBI:67139"/>
        <dbReference type="EC" id="1.17.1.8"/>
    </reaction>
</comment>
<comment type="pathway">
    <text evidence="1">Amino-acid biosynthesis; L-lysine biosynthesis via DAP pathway; (S)-tetrahydrodipicolinate from L-aspartate: step 4/4.</text>
</comment>
<comment type="subcellular location">
    <subcellularLocation>
        <location evidence="1">Cytoplasm</location>
    </subcellularLocation>
</comment>
<comment type="similarity">
    <text evidence="1">Belongs to the DapB family.</text>
</comment>
<comment type="caution">
    <text evidence="2">Was originally thought to be a dihydrodipicolinate reductase (DHDPR), catalyzing the conversion of dihydrodipicolinate to tetrahydrodipicolinate. However, it was shown in E.coli that the substrate of the enzymatic reaction is not dihydrodipicolinate (DHDP) but in fact (2S,4S)-4-hydroxy-2,3,4,5-tetrahydrodipicolinic acid (HTPA), the product released by the DapA-catalyzed reaction.</text>
</comment>
<keyword id="KW-0028">Amino-acid biosynthesis</keyword>
<keyword id="KW-0963">Cytoplasm</keyword>
<keyword id="KW-0220">Diaminopimelate biosynthesis</keyword>
<keyword id="KW-0457">Lysine biosynthesis</keyword>
<keyword id="KW-0520">NAD</keyword>
<keyword id="KW-0521">NADP</keyword>
<keyword id="KW-0560">Oxidoreductase</keyword>